<gene>
    <name type="ORF">SPAC7D4.03c</name>
</gene>
<proteinExistence type="inferred from homology"/>
<feature type="chain" id="PRO_0000339166" description="UPF0592 membrane protein C7D4.03c">
    <location>
        <begin position="1"/>
        <end position="886"/>
    </location>
</feature>
<feature type="transmembrane region" description="Helical" evidence="1">
    <location>
        <begin position="277"/>
        <end position="297"/>
    </location>
</feature>
<feature type="transmembrane region" description="Helical" evidence="1">
    <location>
        <begin position="374"/>
        <end position="394"/>
    </location>
</feature>
<feature type="transmembrane region" description="Helical" evidence="1">
    <location>
        <begin position="400"/>
        <end position="420"/>
    </location>
</feature>
<feature type="region of interest" description="Disordered" evidence="2">
    <location>
        <begin position="87"/>
        <end position="112"/>
    </location>
</feature>
<feature type="compositionally biased region" description="Low complexity" evidence="2">
    <location>
        <begin position="95"/>
        <end position="112"/>
    </location>
</feature>
<sequence length="886" mass="101026">MGDFQSRYEILAAIMGPPNTASFKEEEHSGSQTKNYPVVVKCIQEHDPVDTTNVLVADDLDSNFEPFSITDDYGKYENTLVSHSSTILNEPYNESPSSSSSDSSSRSTSPFSQLSSQSLRLNAEEIAPSSLINKAVQSTLRLSEPLVSPIKCPLSEQFINFINQQDSDKVVLIRGFLLPHLASLTTKNVSEPELDKLRHSLYNWWVSILRRLQSNISTSERITYTKAILAIAKHHCWNKVEHSALLYLEHQLILYDTLTFVVHLLSQKSLPYSLTTFCASILVLSFFQLPLFADHFLSALDVKKKYIDALGSSFDEKIMIISHKYLAPFFTDQFSSTMHPYYPKRTSTPFTIGYNRQPIEFTRAWMRRFKSSTGGFFFEFLSCYHSFLALQFSFELPDNVIYFAPGYICLHAYLLELTISVIHISDKKPLMLPTGHEQFPCKTLPEVNPSMEEYNPKMPVTATTLSTLQQFVGHIKDAFKKIGDCRQEQMRLLAVLEQVLINVAKNTPAFNLQSCFLLCSLVEQCFGVFNDFSHRFDFSFWISVAKRLISTSHNMSIVRSITFIYAVWPYLDIKSKELVTLQWLLEENTFQELFLHWSPLVRAYFQRLVCWRFLKLDDMEEFQFKGTVTLRVKNLLKHYFTAQALYHEECLVNGRASPITKPSEPVPMRRLTIVCNHYQNYGNSESTEFELSNYKQDDGTIQALVTDVVSISNSFSSGLKKAFGSLFKNVSGLPAETEIAYHHTLSASNSYVFTDLVDNPDSMLKSTLKYRFVFKFSPSQPLSSLGKNKEKYDALLERSSHGVLPVQSKMLLYNSNHISCPLSSIKGVSVNGKRLVYTSRALVEWALVVNEFDHALSLRKGNETEDMEAPTLTVRIPKSYASNIYN</sequence>
<organism>
    <name type="scientific">Schizosaccharomyces pombe (strain 972 / ATCC 24843)</name>
    <name type="common">Fission yeast</name>
    <dbReference type="NCBI Taxonomy" id="284812"/>
    <lineage>
        <taxon>Eukaryota</taxon>
        <taxon>Fungi</taxon>
        <taxon>Dikarya</taxon>
        <taxon>Ascomycota</taxon>
        <taxon>Taphrinomycotina</taxon>
        <taxon>Schizosaccharomycetes</taxon>
        <taxon>Schizosaccharomycetales</taxon>
        <taxon>Schizosaccharomycetaceae</taxon>
        <taxon>Schizosaccharomyces</taxon>
    </lineage>
</organism>
<name>YFP3_SCHPO</name>
<reference key="1">
    <citation type="journal article" date="2002" name="Nature">
        <title>The genome sequence of Schizosaccharomyces pombe.</title>
        <authorList>
            <person name="Wood V."/>
            <person name="Gwilliam R."/>
            <person name="Rajandream M.A."/>
            <person name="Lyne M.H."/>
            <person name="Lyne R."/>
            <person name="Stewart A."/>
            <person name="Sgouros J.G."/>
            <person name="Peat N."/>
            <person name="Hayles J."/>
            <person name="Baker S.G."/>
            <person name="Basham D."/>
            <person name="Bowman S."/>
            <person name="Brooks K."/>
            <person name="Brown D."/>
            <person name="Brown S."/>
            <person name="Chillingworth T."/>
            <person name="Churcher C.M."/>
            <person name="Collins M."/>
            <person name="Connor R."/>
            <person name="Cronin A."/>
            <person name="Davis P."/>
            <person name="Feltwell T."/>
            <person name="Fraser A."/>
            <person name="Gentles S."/>
            <person name="Goble A."/>
            <person name="Hamlin N."/>
            <person name="Harris D.E."/>
            <person name="Hidalgo J."/>
            <person name="Hodgson G."/>
            <person name="Holroyd S."/>
            <person name="Hornsby T."/>
            <person name="Howarth S."/>
            <person name="Huckle E.J."/>
            <person name="Hunt S."/>
            <person name="Jagels K."/>
            <person name="James K.D."/>
            <person name="Jones L."/>
            <person name="Jones M."/>
            <person name="Leather S."/>
            <person name="McDonald S."/>
            <person name="McLean J."/>
            <person name="Mooney P."/>
            <person name="Moule S."/>
            <person name="Mungall K.L."/>
            <person name="Murphy L.D."/>
            <person name="Niblett D."/>
            <person name="Odell C."/>
            <person name="Oliver K."/>
            <person name="O'Neil S."/>
            <person name="Pearson D."/>
            <person name="Quail M.A."/>
            <person name="Rabbinowitsch E."/>
            <person name="Rutherford K.M."/>
            <person name="Rutter S."/>
            <person name="Saunders D."/>
            <person name="Seeger K."/>
            <person name="Sharp S."/>
            <person name="Skelton J."/>
            <person name="Simmonds M.N."/>
            <person name="Squares R."/>
            <person name="Squares S."/>
            <person name="Stevens K."/>
            <person name="Taylor K."/>
            <person name="Taylor R.G."/>
            <person name="Tivey A."/>
            <person name="Walsh S.V."/>
            <person name="Warren T."/>
            <person name="Whitehead S."/>
            <person name="Woodward J.R."/>
            <person name="Volckaert G."/>
            <person name="Aert R."/>
            <person name="Robben J."/>
            <person name="Grymonprez B."/>
            <person name="Weltjens I."/>
            <person name="Vanstreels E."/>
            <person name="Rieger M."/>
            <person name="Schaefer M."/>
            <person name="Mueller-Auer S."/>
            <person name="Gabel C."/>
            <person name="Fuchs M."/>
            <person name="Duesterhoeft A."/>
            <person name="Fritzc C."/>
            <person name="Holzer E."/>
            <person name="Moestl D."/>
            <person name="Hilbert H."/>
            <person name="Borzym K."/>
            <person name="Langer I."/>
            <person name="Beck A."/>
            <person name="Lehrach H."/>
            <person name="Reinhardt R."/>
            <person name="Pohl T.M."/>
            <person name="Eger P."/>
            <person name="Zimmermann W."/>
            <person name="Wedler H."/>
            <person name="Wambutt R."/>
            <person name="Purnelle B."/>
            <person name="Goffeau A."/>
            <person name="Cadieu E."/>
            <person name="Dreano S."/>
            <person name="Gloux S."/>
            <person name="Lelaure V."/>
            <person name="Mottier S."/>
            <person name="Galibert F."/>
            <person name="Aves S.J."/>
            <person name="Xiang Z."/>
            <person name="Hunt C."/>
            <person name="Moore K."/>
            <person name="Hurst S.M."/>
            <person name="Lucas M."/>
            <person name="Rochet M."/>
            <person name="Gaillardin C."/>
            <person name="Tallada V.A."/>
            <person name="Garzon A."/>
            <person name="Thode G."/>
            <person name="Daga R.R."/>
            <person name="Cruzado L."/>
            <person name="Jimenez J."/>
            <person name="Sanchez M."/>
            <person name="del Rey F."/>
            <person name="Benito J."/>
            <person name="Dominguez A."/>
            <person name="Revuelta J.L."/>
            <person name="Moreno S."/>
            <person name="Armstrong J."/>
            <person name="Forsburg S.L."/>
            <person name="Cerutti L."/>
            <person name="Lowe T."/>
            <person name="McCombie W.R."/>
            <person name="Paulsen I."/>
            <person name="Potashkin J."/>
            <person name="Shpakovski G.V."/>
            <person name="Ussery D."/>
            <person name="Barrell B.G."/>
            <person name="Nurse P."/>
        </authorList>
    </citation>
    <scope>NUCLEOTIDE SEQUENCE [LARGE SCALE GENOMIC DNA]</scope>
    <source>
        <strain>972 / ATCC 24843</strain>
    </source>
</reference>
<keyword id="KW-0472">Membrane</keyword>
<keyword id="KW-1185">Reference proteome</keyword>
<keyword id="KW-0812">Transmembrane</keyword>
<keyword id="KW-1133">Transmembrane helix</keyword>
<accession>O14260</accession>
<protein>
    <recommendedName>
        <fullName>UPF0592 membrane protein C7D4.03c</fullName>
    </recommendedName>
</protein>
<comment type="subcellular location">
    <subcellularLocation>
        <location evidence="3">Membrane</location>
        <topology evidence="3">Multi-pass membrane protein</topology>
    </subcellularLocation>
</comment>
<comment type="similarity">
    <text evidence="3">Belongs to the UPF0592 family.</text>
</comment>
<evidence type="ECO:0000255" key="1"/>
<evidence type="ECO:0000256" key="2">
    <source>
        <dbReference type="SAM" id="MobiDB-lite"/>
    </source>
</evidence>
<evidence type="ECO:0000305" key="3"/>
<dbReference type="EMBL" id="CU329670">
    <property type="protein sequence ID" value="CAB16720.1"/>
    <property type="molecule type" value="Genomic_DNA"/>
</dbReference>
<dbReference type="PIR" id="T39081">
    <property type="entry name" value="T39081"/>
</dbReference>
<dbReference type="BioGRID" id="278566">
    <property type="interactions" value="2"/>
</dbReference>
<dbReference type="STRING" id="284812.O14260"/>
<dbReference type="iPTMnet" id="O14260"/>
<dbReference type="PaxDb" id="4896-SPAC7D4.03c.1"/>
<dbReference type="EnsemblFungi" id="SPAC7D4.03c.1">
    <property type="protein sequence ID" value="SPAC7D4.03c.1:pep"/>
    <property type="gene ID" value="SPAC7D4.03c"/>
</dbReference>
<dbReference type="KEGG" id="spo:2542089"/>
<dbReference type="PomBase" id="SPAC7D4.03c"/>
<dbReference type="VEuPathDB" id="FungiDB:SPAC7D4.03c"/>
<dbReference type="eggNOG" id="ENOG502QWKM">
    <property type="taxonomic scope" value="Eukaryota"/>
</dbReference>
<dbReference type="HOGENOM" id="CLU_003877_1_0_1"/>
<dbReference type="InParanoid" id="O14260"/>
<dbReference type="OMA" id="FCAKILV"/>
<dbReference type="PhylomeDB" id="O14260"/>
<dbReference type="PRO" id="PR:O14260"/>
<dbReference type="Proteomes" id="UP000002485">
    <property type="component" value="Chromosome I"/>
</dbReference>
<dbReference type="GO" id="GO:0016020">
    <property type="term" value="C:membrane"/>
    <property type="evidence" value="ECO:0007669"/>
    <property type="project" value="UniProtKB-SubCell"/>
</dbReference>
<dbReference type="GO" id="GO:0005078">
    <property type="term" value="F:MAP-kinase scaffold activity"/>
    <property type="evidence" value="ECO:0000266"/>
    <property type="project" value="PomBase"/>
</dbReference>
<dbReference type="InterPro" id="IPR013887">
    <property type="entry name" value="UPF0592"/>
</dbReference>
<dbReference type="PANTHER" id="PTHR37988">
    <property type="entry name" value="UPF0592 MEMBRANE PROTEIN C7D4.03C"/>
    <property type="match status" value="1"/>
</dbReference>
<dbReference type="PANTHER" id="PTHR37988:SF1">
    <property type="entry name" value="UPF0592 MEMBRANE PROTEIN C7D4.03C"/>
    <property type="match status" value="1"/>
</dbReference>
<dbReference type="Pfam" id="PF08578">
    <property type="entry name" value="DUF1765"/>
    <property type="match status" value="1"/>
</dbReference>